<protein>
    <recommendedName>
        <fullName>Type 1 phosphatases regulator YPI1</fullName>
    </recommendedName>
</protein>
<keyword id="KW-0539">Nucleus</keyword>
<keyword id="KW-1185">Reference proteome</keyword>
<name>YPI1_YARLI</name>
<evidence type="ECO:0000250" key="1"/>
<evidence type="ECO:0000256" key="2">
    <source>
        <dbReference type="SAM" id="MobiDB-lite"/>
    </source>
</evidence>
<evidence type="ECO:0000305" key="3"/>
<proteinExistence type="inferred from homology"/>
<accession>Q6C0K1</accession>
<sequence>MSHNQQAAQPSSSRTQVIEREASPGVLTVRGAAEDEDSNVRFTEEVVDNEHMDKKKSKICCIYHPPAEFGESSEEESCGSDDSGPESDEGDIPNARKPKKKNKGKCGGHRDPSPNAYERKPRPKKN</sequence>
<gene>
    <name type="primary">YPI1</name>
    <name type="ordered locus">YALI0F23991g</name>
</gene>
<dbReference type="EMBL" id="CR382132">
    <property type="protein sequence ID" value="CAG78622.1"/>
    <property type="molecule type" value="Genomic_DNA"/>
</dbReference>
<dbReference type="RefSeq" id="XP_505811.1">
    <property type="nucleotide sequence ID" value="XM_505811.1"/>
</dbReference>
<dbReference type="SMR" id="Q6C0K1"/>
<dbReference type="STRING" id="284591.Q6C0K1"/>
<dbReference type="EnsemblFungi" id="CAG78622">
    <property type="protein sequence ID" value="CAG78622"/>
    <property type="gene ID" value="YALI0_F23991g"/>
</dbReference>
<dbReference type="KEGG" id="yli:2908741"/>
<dbReference type="VEuPathDB" id="FungiDB:YALI0_F23991g"/>
<dbReference type="HOGENOM" id="CLU_098333_3_0_1"/>
<dbReference type="InParanoid" id="Q6C0K1"/>
<dbReference type="OMA" id="AYEVQPH"/>
<dbReference type="OrthoDB" id="120990at4891"/>
<dbReference type="Proteomes" id="UP000001300">
    <property type="component" value="Chromosome F"/>
</dbReference>
<dbReference type="GO" id="GO:0005634">
    <property type="term" value="C:nucleus"/>
    <property type="evidence" value="ECO:0000318"/>
    <property type="project" value="GO_Central"/>
</dbReference>
<dbReference type="GO" id="GO:0000164">
    <property type="term" value="C:protein phosphatase type 1 complex"/>
    <property type="evidence" value="ECO:0007669"/>
    <property type="project" value="EnsemblFungi"/>
</dbReference>
<dbReference type="GO" id="GO:0008157">
    <property type="term" value="F:protein phosphatase 1 binding"/>
    <property type="evidence" value="ECO:0000318"/>
    <property type="project" value="GO_Central"/>
</dbReference>
<dbReference type="GO" id="GO:0072542">
    <property type="term" value="F:protein phosphatase activator activity"/>
    <property type="evidence" value="ECO:0007669"/>
    <property type="project" value="EnsemblFungi"/>
</dbReference>
<dbReference type="GO" id="GO:0004865">
    <property type="term" value="F:protein serine/threonine phosphatase inhibitor activity"/>
    <property type="evidence" value="ECO:0000318"/>
    <property type="project" value="GO_Central"/>
</dbReference>
<dbReference type="GO" id="GO:0005977">
    <property type="term" value="P:glycogen metabolic process"/>
    <property type="evidence" value="ECO:0007669"/>
    <property type="project" value="EnsemblFungi"/>
</dbReference>
<dbReference type="GO" id="GO:0006873">
    <property type="term" value="P:intracellular monoatomic ion homeostasis"/>
    <property type="evidence" value="ECO:0007669"/>
    <property type="project" value="EnsemblFungi"/>
</dbReference>
<dbReference type="GO" id="GO:0007094">
    <property type="term" value="P:mitotic spindle assembly checkpoint signaling"/>
    <property type="evidence" value="ECO:0007669"/>
    <property type="project" value="EnsemblFungi"/>
</dbReference>
<dbReference type="GO" id="GO:1900180">
    <property type="term" value="P:regulation of protein localization to nucleus"/>
    <property type="evidence" value="ECO:0007669"/>
    <property type="project" value="EnsemblFungi"/>
</dbReference>
<dbReference type="InterPro" id="IPR011107">
    <property type="entry name" value="PPI_Ypi1"/>
</dbReference>
<dbReference type="PANTHER" id="PTHR20835:SF0">
    <property type="entry name" value="E3 UBIQUITIN-PROTEIN LIGASE PPP1R11"/>
    <property type="match status" value="1"/>
</dbReference>
<dbReference type="PANTHER" id="PTHR20835">
    <property type="entry name" value="E3 UBIQUITIN-PROTEIN LIGASE PPP1R11-RELATED"/>
    <property type="match status" value="1"/>
</dbReference>
<dbReference type="Pfam" id="PF07491">
    <property type="entry name" value="PPI_Ypi1"/>
    <property type="match status" value="1"/>
</dbReference>
<comment type="function">
    <text evidence="1">Regulator of type 1 phosphatases which maintains protein phosphatase activity under strict control.</text>
</comment>
<comment type="subcellular location">
    <subcellularLocation>
        <location evidence="1">Nucleus</location>
    </subcellularLocation>
</comment>
<comment type="similarity">
    <text evidence="3">Belongs to the YPI1 family.</text>
</comment>
<feature type="chain" id="PRO_0000333487" description="Type 1 phosphatases regulator YPI1">
    <location>
        <begin position="1"/>
        <end position="126"/>
    </location>
</feature>
<feature type="region of interest" description="Disordered" evidence="2">
    <location>
        <begin position="1"/>
        <end position="126"/>
    </location>
</feature>
<feature type="compositionally biased region" description="Polar residues" evidence="2">
    <location>
        <begin position="1"/>
        <end position="16"/>
    </location>
</feature>
<feature type="compositionally biased region" description="Basic and acidic residues" evidence="2">
    <location>
        <begin position="38"/>
        <end position="53"/>
    </location>
</feature>
<feature type="compositionally biased region" description="Acidic residues" evidence="2">
    <location>
        <begin position="71"/>
        <end position="91"/>
    </location>
</feature>
<feature type="compositionally biased region" description="Basic residues" evidence="2">
    <location>
        <begin position="96"/>
        <end position="107"/>
    </location>
</feature>
<feature type="compositionally biased region" description="Basic and acidic residues" evidence="2">
    <location>
        <begin position="108"/>
        <end position="120"/>
    </location>
</feature>
<reference key="1">
    <citation type="journal article" date="2004" name="Nature">
        <title>Genome evolution in yeasts.</title>
        <authorList>
            <person name="Dujon B."/>
            <person name="Sherman D."/>
            <person name="Fischer G."/>
            <person name="Durrens P."/>
            <person name="Casaregola S."/>
            <person name="Lafontaine I."/>
            <person name="de Montigny J."/>
            <person name="Marck C."/>
            <person name="Neuveglise C."/>
            <person name="Talla E."/>
            <person name="Goffard N."/>
            <person name="Frangeul L."/>
            <person name="Aigle M."/>
            <person name="Anthouard V."/>
            <person name="Babour A."/>
            <person name="Barbe V."/>
            <person name="Barnay S."/>
            <person name="Blanchin S."/>
            <person name="Beckerich J.-M."/>
            <person name="Beyne E."/>
            <person name="Bleykasten C."/>
            <person name="Boisrame A."/>
            <person name="Boyer J."/>
            <person name="Cattolico L."/>
            <person name="Confanioleri F."/>
            <person name="de Daruvar A."/>
            <person name="Despons L."/>
            <person name="Fabre E."/>
            <person name="Fairhead C."/>
            <person name="Ferry-Dumazet H."/>
            <person name="Groppi A."/>
            <person name="Hantraye F."/>
            <person name="Hennequin C."/>
            <person name="Jauniaux N."/>
            <person name="Joyet P."/>
            <person name="Kachouri R."/>
            <person name="Kerrest A."/>
            <person name="Koszul R."/>
            <person name="Lemaire M."/>
            <person name="Lesur I."/>
            <person name="Ma L."/>
            <person name="Muller H."/>
            <person name="Nicaud J.-M."/>
            <person name="Nikolski M."/>
            <person name="Oztas S."/>
            <person name="Ozier-Kalogeropoulos O."/>
            <person name="Pellenz S."/>
            <person name="Potier S."/>
            <person name="Richard G.-F."/>
            <person name="Straub M.-L."/>
            <person name="Suleau A."/>
            <person name="Swennen D."/>
            <person name="Tekaia F."/>
            <person name="Wesolowski-Louvel M."/>
            <person name="Westhof E."/>
            <person name="Wirth B."/>
            <person name="Zeniou-Meyer M."/>
            <person name="Zivanovic Y."/>
            <person name="Bolotin-Fukuhara M."/>
            <person name="Thierry A."/>
            <person name="Bouchier C."/>
            <person name="Caudron B."/>
            <person name="Scarpelli C."/>
            <person name="Gaillardin C."/>
            <person name="Weissenbach J."/>
            <person name="Wincker P."/>
            <person name="Souciet J.-L."/>
        </authorList>
    </citation>
    <scope>NUCLEOTIDE SEQUENCE [LARGE SCALE GENOMIC DNA]</scope>
    <source>
        <strain>CLIB 122 / E 150</strain>
    </source>
</reference>
<organism>
    <name type="scientific">Yarrowia lipolytica (strain CLIB 122 / E 150)</name>
    <name type="common">Yeast</name>
    <name type="synonym">Candida lipolytica</name>
    <dbReference type="NCBI Taxonomy" id="284591"/>
    <lineage>
        <taxon>Eukaryota</taxon>
        <taxon>Fungi</taxon>
        <taxon>Dikarya</taxon>
        <taxon>Ascomycota</taxon>
        <taxon>Saccharomycotina</taxon>
        <taxon>Dipodascomycetes</taxon>
        <taxon>Dipodascales</taxon>
        <taxon>Dipodascales incertae sedis</taxon>
        <taxon>Yarrowia</taxon>
    </lineage>
</organism>